<protein>
    <recommendedName>
        <fullName evidence="1">LexA repressor</fullName>
        <ecNumber evidence="1">3.4.21.88</ecNumber>
    </recommendedName>
</protein>
<organism>
    <name type="scientific">Mycolicibacterium gilvum (strain PYR-GCK)</name>
    <name type="common">Mycobacterium gilvum (strain PYR-GCK)</name>
    <dbReference type="NCBI Taxonomy" id="350054"/>
    <lineage>
        <taxon>Bacteria</taxon>
        <taxon>Bacillati</taxon>
        <taxon>Actinomycetota</taxon>
        <taxon>Actinomycetes</taxon>
        <taxon>Mycobacteriales</taxon>
        <taxon>Mycobacteriaceae</taxon>
        <taxon>Mycolicibacterium</taxon>
    </lineage>
</organism>
<keyword id="KW-0068">Autocatalytic cleavage</keyword>
<keyword id="KW-0227">DNA damage</keyword>
<keyword id="KW-0234">DNA repair</keyword>
<keyword id="KW-0235">DNA replication</keyword>
<keyword id="KW-0238">DNA-binding</keyword>
<keyword id="KW-0378">Hydrolase</keyword>
<keyword id="KW-0678">Repressor</keyword>
<keyword id="KW-0742">SOS response</keyword>
<keyword id="KW-0804">Transcription</keyword>
<keyword id="KW-0805">Transcription regulation</keyword>
<name>LEXA_MYCGI</name>
<sequence>MSDDSSDSTDAPGTSRSRDSGLTERQRTILDVIRASVTTRGYPPSIREIGDAVGLTSTSSVAHQLRTLERKGYLRRDANRPRAVDVRAADDHPTPIVATEVAGSDALPEPTFVPVLGRIAAGGPILAEEAVEDVFPLPRELVGEGSLFLLKVVGESMVDAAICDGDWVVVRQQSVADNGDIVAAMIDGEATVKTFKRTKGQVWLMPHNPAFDPIPGNDAAILGKVVTVIRKI</sequence>
<accession>A4TCN9</accession>
<reference key="1">
    <citation type="submission" date="2007-04" db="EMBL/GenBank/DDBJ databases">
        <title>Complete sequence of chromosome of Mycobacterium gilvum PYR-GCK.</title>
        <authorList>
            <consortium name="US DOE Joint Genome Institute"/>
            <person name="Copeland A."/>
            <person name="Lucas S."/>
            <person name="Lapidus A."/>
            <person name="Barry K."/>
            <person name="Detter J.C."/>
            <person name="Glavina del Rio T."/>
            <person name="Hammon N."/>
            <person name="Israni S."/>
            <person name="Dalin E."/>
            <person name="Tice H."/>
            <person name="Pitluck S."/>
            <person name="Chain P."/>
            <person name="Malfatti S."/>
            <person name="Shin M."/>
            <person name="Vergez L."/>
            <person name="Schmutz J."/>
            <person name="Larimer F."/>
            <person name="Land M."/>
            <person name="Hauser L."/>
            <person name="Kyrpides N."/>
            <person name="Mikhailova N."/>
            <person name="Miller C."/>
            <person name="Richardson P."/>
        </authorList>
    </citation>
    <scope>NUCLEOTIDE SEQUENCE [LARGE SCALE GENOMIC DNA]</scope>
    <source>
        <strain>PYR-GCK</strain>
    </source>
</reference>
<gene>
    <name evidence="1" type="primary">lexA</name>
    <name type="ordered locus">Mflv_3956</name>
</gene>
<dbReference type="EC" id="3.4.21.88" evidence="1"/>
<dbReference type="EMBL" id="CP000656">
    <property type="protein sequence ID" value="ABP46427.1"/>
    <property type="molecule type" value="Genomic_DNA"/>
</dbReference>
<dbReference type="SMR" id="A4TCN9"/>
<dbReference type="STRING" id="350054.Mflv_3956"/>
<dbReference type="MEROPS" id="S24.001"/>
<dbReference type="KEGG" id="mgi:Mflv_3956"/>
<dbReference type="eggNOG" id="COG1974">
    <property type="taxonomic scope" value="Bacteria"/>
</dbReference>
<dbReference type="HOGENOM" id="CLU_066192_45_0_11"/>
<dbReference type="OrthoDB" id="9802364at2"/>
<dbReference type="GO" id="GO:0003677">
    <property type="term" value="F:DNA binding"/>
    <property type="evidence" value="ECO:0007669"/>
    <property type="project" value="UniProtKB-UniRule"/>
</dbReference>
<dbReference type="GO" id="GO:0004252">
    <property type="term" value="F:serine-type endopeptidase activity"/>
    <property type="evidence" value="ECO:0007669"/>
    <property type="project" value="UniProtKB-UniRule"/>
</dbReference>
<dbReference type="GO" id="GO:0006281">
    <property type="term" value="P:DNA repair"/>
    <property type="evidence" value="ECO:0007669"/>
    <property type="project" value="UniProtKB-UniRule"/>
</dbReference>
<dbReference type="GO" id="GO:0006260">
    <property type="term" value="P:DNA replication"/>
    <property type="evidence" value="ECO:0007669"/>
    <property type="project" value="UniProtKB-UniRule"/>
</dbReference>
<dbReference type="GO" id="GO:0045892">
    <property type="term" value="P:negative regulation of DNA-templated transcription"/>
    <property type="evidence" value="ECO:0007669"/>
    <property type="project" value="UniProtKB-UniRule"/>
</dbReference>
<dbReference type="GO" id="GO:0006508">
    <property type="term" value="P:proteolysis"/>
    <property type="evidence" value="ECO:0007669"/>
    <property type="project" value="InterPro"/>
</dbReference>
<dbReference type="GO" id="GO:0009432">
    <property type="term" value="P:SOS response"/>
    <property type="evidence" value="ECO:0007669"/>
    <property type="project" value="UniProtKB-UniRule"/>
</dbReference>
<dbReference type="CDD" id="cd06529">
    <property type="entry name" value="S24_LexA-like"/>
    <property type="match status" value="1"/>
</dbReference>
<dbReference type="FunFam" id="1.10.10.10:FF:000009">
    <property type="entry name" value="LexA repressor"/>
    <property type="match status" value="1"/>
</dbReference>
<dbReference type="FunFam" id="2.10.109.10:FF:000001">
    <property type="entry name" value="LexA repressor"/>
    <property type="match status" value="1"/>
</dbReference>
<dbReference type="Gene3D" id="2.10.109.10">
    <property type="entry name" value="Umud Fragment, subunit A"/>
    <property type="match status" value="1"/>
</dbReference>
<dbReference type="Gene3D" id="1.10.10.10">
    <property type="entry name" value="Winged helix-like DNA-binding domain superfamily/Winged helix DNA-binding domain"/>
    <property type="match status" value="1"/>
</dbReference>
<dbReference type="HAMAP" id="MF_00015">
    <property type="entry name" value="LexA"/>
    <property type="match status" value="1"/>
</dbReference>
<dbReference type="InterPro" id="IPR006200">
    <property type="entry name" value="LexA"/>
</dbReference>
<dbReference type="InterPro" id="IPR039418">
    <property type="entry name" value="LexA-like"/>
</dbReference>
<dbReference type="InterPro" id="IPR036286">
    <property type="entry name" value="LexA/Signal_pep-like_sf"/>
</dbReference>
<dbReference type="InterPro" id="IPR006199">
    <property type="entry name" value="LexA_DNA-bd_dom"/>
</dbReference>
<dbReference type="InterPro" id="IPR050077">
    <property type="entry name" value="LexA_repressor"/>
</dbReference>
<dbReference type="InterPro" id="IPR006197">
    <property type="entry name" value="Peptidase_S24_LexA"/>
</dbReference>
<dbReference type="InterPro" id="IPR015927">
    <property type="entry name" value="Peptidase_S24_S26A/B/C"/>
</dbReference>
<dbReference type="InterPro" id="IPR036388">
    <property type="entry name" value="WH-like_DNA-bd_sf"/>
</dbReference>
<dbReference type="InterPro" id="IPR036390">
    <property type="entry name" value="WH_DNA-bd_sf"/>
</dbReference>
<dbReference type="NCBIfam" id="TIGR00498">
    <property type="entry name" value="lexA"/>
    <property type="match status" value="1"/>
</dbReference>
<dbReference type="PANTHER" id="PTHR33516">
    <property type="entry name" value="LEXA REPRESSOR"/>
    <property type="match status" value="1"/>
</dbReference>
<dbReference type="PANTHER" id="PTHR33516:SF2">
    <property type="entry name" value="LEXA REPRESSOR-RELATED"/>
    <property type="match status" value="1"/>
</dbReference>
<dbReference type="Pfam" id="PF01726">
    <property type="entry name" value="LexA_DNA_bind"/>
    <property type="match status" value="1"/>
</dbReference>
<dbReference type="Pfam" id="PF00717">
    <property type="entry name" value="Peptidase_S24"/>
    <property type="match status" value="1"/>
</dbReference>
<dbReference type="PRINTS" id="PR00726">
    <property type="entry name" value="LEXASERPTASE"/>
</dbReference>
<dbReference type="SUPFAM" id="SSF51306">
    <property type="entry name" value="LexA/Signal peptidase"/>
    <property type="match status" value="1"/>
</dbReference>
<dbReference type="SUPFAM" id="SSF46785">
    <property type="entry name" value="Winged helix' DNA-binding domain"/>
    <property type="match status" value="1"/>
</dbReference>
<feature type="chain" id="PRO_1000074059" description="LexA repressor">
    <location>
        <begin position="1"/>
        <end position="232"/>
    </location>
</feature>
<feature type="DNA-binding region" description="H-T-H motif" evidence="1">
    <location>
        <begin position="46"/>
        <end position="66"/>
    </location>
</feature>
<feature type="region of interest" description="Disordered" evidence="2">
    <location>
        <begin position="1"/>
        <end position="25"/>
    </location>
</feature>
<feature type="compositionally biased region" description="Basic and acidic residues" evidence="2">
    <location>
        <begin position="16"/>
        <end position="25"/>
    </location>
</feature>
<feature type="active site" description="For autocatalytic cleavage activity" evidence="1">
    <location>
        <position position="156"/>
    </location>
</feature>
<feature type="active site" description="For autocatalytic cleavage activity" evidence="1">
    <location>
        <position position="193"/>
    </location>
</feature>
<feature type="site" description="Cleavage; by autolysis" evidence="1">
    <location>
        <begin position="121"/>
        <end position="122"/>
    </location>
</feature>
<comment type="function">
    <text evidence="1">Represses a number of genes involved in the response to DNA damage (SOS response), including recA and lexA. In the presence of single-stranded DNA, RecA interacts with LexA causing an autocatalytic cleavage which disrupts the DNA-binding part of LexA, leading to derepression of the SOS regulon and eventually DNA repair.</text>
</comment>
<comment type="catalytic activity">
    <reaction evidence="1">
        <text>Hydrolysis of Ala-|-Gly bond in repressor LexA.</text>
        <dbReference type="EC" id="3.4.21.88"/>
    </reaction>
</comment>
<comment type="subunit">
    <text evidence="1">Homodimer.</text>
</comment>
<comment type="similarity">
    <text evidence="1">Belongs to the peptidase S24 family.</text>
</comment>
<evidence type="ECO:0000255" key="1">
    <source>
        <dbReference type="HAMAP-Rule" id="MF_00015"/>
    </source>
</evidence>
<evidence type="ECO:0000256" key="2">
    <source>
        <dbReference type="SAM" id="MobiDB-lite"/>
    </source>
</evidence>
<proteinExistence type="inferred from homology"/>